<reference key="1">
    <citation type="journal article" date="2004" name="Science">
        <title>The Ashbya gossypii genome as a tool for mapping the ancient Saccharomyces cerevisiae genome.</title>
        <authorList>
            <person name="Dietrich F.S."/>
            <person name="Voegeli S."/>
            <person name="Brachat S."/>
            <person name="Lerch A."/>
            <person name="Gates K."/>
            <person name="Steiner S."/>
            <person name="Mohr C."/>
            <person name="Poehlmann R."/>
            <person name="Luedi P."/>
            <person name="Choi S."/>
            <person name="Wing R.A."/>
            <person name="Flavier A."/>
            <person name="Gaffney T.D."/>
            <person name="Philippsen P."/>
        </authorList>
    </citation>
    <scope>NUCLEOTIDE SEQUENCE [LARGE SCALE GENOMIC DNA]</scope>
    <source>
        <strain>ATCC 10895 / CBS 109.51 / FGSC 9923 / NRRL Y-1056</strain>
    </source>
</reference>
<reference key="2">
    <citation type="journal article" date="2013" name="G3 (Bethesda)">
        <title>Genomes of Ashbya fungi isolated from insects reveal four mating-type loci, numerous translocations, lack of transposons, and distinct gene duplications.</title>
        <authorList>
            <person name="Dietrich F.S."/>
            <person name="Voegeli S."/>
            <person name="Kuo S."/>
            <person name="Philippsen P."/>
        </authorList>
    </citation>
    <scope>GENOME REANNOTATION</scope>
    <source>
        <strain>ATCC 10895 / CBS 109.51 / FGSC 9923 / NRRL Y-1056</strain>
    </source>
</reference>
<accession>Q752S6</accession>
<protein>
    <recommendedName>
        <fullName>SWR1-complex protein 4</fullName>
    </recommendedName>
</protein>
<name>SWC4_EREGS</name>
<gene>
    <name type="primary">SWC4</name>
    <name type="ordered locus">AFR497C</name>
</gene>
<organism>
    <name type="scientific">Eremothecium gossypii (strain ATCC 10895 / CBS 109.51 / FGSC 9923 / NRRL Y-1056)</name>
    <name type="common">Yeast</name>
    <name type="synonym">Ashbya gossypii</name>
    <dbReference type="NCBI Taxonomy" id="284811"/>
    <lineage>
        <taxon>Eukaryota</taxon>
        <taxon>Fungi</taxon>
        <taxon>Dikarya</taxon>
        <taxon>Ascomycota</taxon>
        <taxon>Saccharomycotina</taxon>
        <taxon>Saccharomycetes</taxon>
        <taxon>Saccharomycetales</taxon>
        <taxon>Saccharomycetaceae</taxon>
        <taxon>Eremothecium</taxon>
    </lineage>
</organism>
<sequence length="488" mass="56132">MSSSDIFDVLNIQPKSSSPHPQTSQSNAGASKTPKPQVTGMQRELYNLLGDNTPPIVIQPTSKFKDRLASLTKPSPWTHTEFEATPYVKLSHWVKGSKELLEGQSPKSSFAKYDQKLTLPEFTEGEYQEFMAQAAKGANSDAPTWSYEEVQYLFDLCRRYDLRWHIVYDRYMYDESRTMEDIREMFYTVCQKYFQAKDPGNPLLPSLAYSKDQEIQRKKYLTRLLSRSAAEIAEEEALIMESRKFEMAAKKTLQEREAMLRLLDHPQGDANVSQFLTSQGMNQLYNNLLNDKQRRRKPDSAPPENPWMKQQQQFAQQKQQLQLQHQQHHQLRDQKRIEVKTDPVTPGSPKQDSPSPGRKASDQSAAPRMNKKQKLEMQTAMRRKQDSEYAQHLLKNFSSEERKSLGVTLHGEKLAPGVFLRSSKISTFKPSIQNKVVSVLQELGLPVRPAMPSAAVVQHHDELLRRIVTLLDLKRQQDKLEAEKAIVK</sequence>
<feature type="chain" id="PRO_0000076335" description="SWR1-complex protein 4">
    <location>
        <begin position="1"/>
        <end position="488"/>
    </location>
</feature>
<feature type="domain" description="SANT">
    <location>
        <begin position="137"/>
        <end position="190"/>
    </location>
</feature>
<feature type="region of interest" description="Disordered" evidence="2">
    <location>
        <begin position="1"/>
        <end position="37"/>
    </location>
</feature>
<feature type="region of interest" description="Disordered" evidence="2">
    <location>
        <begin position="290"/>
        <end position="387"/>
    </location>
</feature>
<feature type="compositionally biased region" description="Polar residues" evidence="2">
    <location>
        <begin position="13"/>
        <end position="37"/>
    </location>
</feature>
<feature type="compositionally biased region" description="Low complexity" evidence="2">
    <location>
        <begin position="309"/>
        <end position="325"/>
    </location>
</feature>
<feature type="compositionally biased region" description="Basic and acidic residues" evidence="2">
    <location>
        <begin position="330"/>
        <end position="341"/>
    </location>
</feature>
<dbReference type="EMBL" id="AE016819">
    <property type="protein sequence ID" value="AAS53868.1"/>
    <property type="molecule type" value="Genomic_DNA"/>
</dbReference>
<dbReference type="RefSeq" id="NP_986044.1">
    <property type="nucleotide sequence ID" value="NM_212180.1"/>
</dbReference>
<dbReference type="SMR" id="Q752S6"/>
<dbReference type="FunCoup" id="Q752S6">
    <property type="interactions" value="1051"/>
</dbReference>
<dbReference type="STRING" id="284811.Q752S6"/>
<dbReference type="EnsemblFungi" id="AAS53868">
    <property type="protein sequence ID" value="AAS53868"/>
    <property type="gene ID" value="AGOS_AFR497C"/>
</dbReference>
<dbReference type="GeneID" id="4622323"/>
<dbReference type="KEGG" id="ago:AGOS_AFR497C"/>
<dbReference type="eggNOG" id="KOG2656">
    <property type="taxonomic scope" value="Eukaryota"/>
</dbReference>
<dbReference type="HOGENOM" id="CLU_018539_4_0_1"/>
<dbReference type="InParanoid" id="Q752S6"/>
<dbReference type="OMA" id="GNTTMYQ"/>
<dbReference type="OrthoDB" id="19740at2759"/>
<dbReference type="Proteomes" id="UP000000591">
    <property type="component" value="Chromosome VI"/>
</dbReference>
<dbReference type="GO" id="GO:0035267">
    <property type="term" value="C:NuA4 histone acetyltransferase complex"/>
    <property type="evidence" value="ECO:0000318"/>
    <property type="project" value="GO_Central"/>
</dbReference>
<dbReference type="GO" id="GO:0000812">
    <property type="term" value="C:Swr1 complex"/>
    <property type="evidence" value="ECO:0000318"/>
    <property type="project" value="GO_Central"/>
</dbReference>
<dbReference type="GO" id="GO:0003714">
    <property type="term" value="F:transcription corepressor activity"/>
    <property type="evidence" value="ECO:0000318"/>
    <property type="project" value="GO_Central"/>
</dbReference>
<dbReference type="GO" id="GO:0006338">
    <property type="term" value="P:chromatin remodeling"/>
    <property type="evidence" value="ECO:0007669"/>
    <property type="project" value="EnsemblFungi"/>
</dbReference>
<dbReference type="GO" id="GO:0051276">
    <property type="term" value="P:chromosome organization"/>
    <property type="evidence" value="ECO:0007669"/>
    <property type="project" value="EnsemblFungi"/>
</dbReference>
<dbReference type="GO" id="GO:0006281">
    <property type="term" value="P:DNA repair"/>
    <property type="evidence" value="ECO:0007669"/>
    <property type="project" value="UniProtKB-KW"/>
</dbReference>
<dbReference type="GO" id="GO:0000122">
    <property type="term" value="P:negative regulation of transcription by RNA polymerase II"/>
    <property type="evidence" value="ECO:0000318"/>
    <property type="project" value="GO_Central"/>
</dbReference>
<dbReference type="Gene3D" id="1.10.10.60">
    <property type="entry name" value="Homeodomain-like"/>
    <property type="match status" value="1"/>
</dbReference>
<dbReference type="InterPro" id="IPR032563">
    <property type="entry name" value="DAMP1_SANT-like"/>
</dbReference>
<dbReference type="InterPro" id="IPR027109">
    <property type="entry name" value="Swc4/Dmap1"/>
</dbReference>
<dbReference type="PANTHER" id="PTHR12855:SF10">
    <property type="entry name" value="DNA METHYLTRANSFERASE 1-ASSOCIATED PROTEIN 1"/>
    <property type="match status" value="1"/>
</dbReference>
<dbReference type="PANTHER" id="PTHR12855">
    <property type="entry name" value="DNA METHYLTRANSFERASE 1-ASSOCIATED PROTEIN 1 FAMILY MEMBER"/>
    <property type="match status" value="1"/>
</dbReference>
<dbReference type="Pfam" id="PF16282">
    <property type="entry name" value="SANT_DAMP1_like"/>
    <property type="match status" value="1"/>
</dbReference>
<evidence type="ECO:0000250" key="1"/>
<evidence type="ECO:0000256" key="2">
    <source>
        <dbReference type="SAM" id="MobiDB-lite"/>
    </source>
</evidence>
<evidence type="ECO:0000305" key="3"/>
<keyword id="KW-0010">Activator</keyword>
<keyword id="KW-0156">Chromatin regulator</keyword>
<keyword id="KW-0227">DNA damage</keyword>
<keyword id="KW-0234">DNA repair</keyword>
<keyword id="KW-0539">Nucleus</keyword>
<keyword id="KW-1185">Reference proteome</keyword>
<keyword id="KW-0804">Transcription</keyword>
<keyword id="KW-0805">Transcription regulation</keyword>
<proteinExistence type="inferred from homology"/>
<comment type="function">
    <text evidence="1">Component of the SWR1 complex which mediates the ATP-dependent exchange of histone H2A for the H2A variant HZT1 leading to transcriptional regulation of selected genes by chromatin remodeling. Component of the NuA4 histone acetyltransferase complex which is involved in transcriptional activation of selected genes principally by acetylation of nucleosomal histone H4 and H2A. The NuA4 complex is also involved in DNA repair (By similarity).</text>
</comment>
<comment type="subunit">
    <text evidence="1">Component of the SWR1 chromatin-remodeling complex and of the NuA4 histone acetyltransferase complex.</text>
</comment>
<comment type="subcellular location">
    <subcellularLocation>
        <location evidence="1">Nucleus</location>
    </subcellularLocation>
</comment>
<comment type="similarity">
    <text evidence="3">Belongs to the SWC4 family.</text>
</comment>